<keyword id="KW-1003">Cell membrane</keyword>
<keyword id="KW-0249">Electron transport</keyword>
<keyword id="KW-0274">FAD</keyword>
<keyword id="KW-0285">Flavoprotein</keyword>
<keyword id="KW-0325">Glycoprotein</keyword>
<keyword id="KW-0349">Heme</keyword>
<keyword id="KW-0406">Ion transport</keyword>
<keyword id="KW-0408">Iron</keyword>
<keyword id="KW-0472">Membrane</keyword>
<keyword id="KW-0479">Metal-binding</keyword>
<keyword id="KW-0521">NADP</keyword>
<keyword id="KW-0560">Oxidoreductase</keyword>
<keyword id="KW-1185">Reference proteome</keyword>
<keyword id="KW-0732">Signal</keyword>
<keyword id="KW-0812">Transmembrane</keyword>
<keyword id="KW-1133">Transmembrane helix</keyword>
<keyword id="KW-0813">Transport</keyword>
<gene>
    <name type="primary">FRE5</name>
    <name type="ordered locus">YOR384W</name>
    <name type="ORF">O6765</name>
</gene>
<reference key="1">
    <citation type="journal article" date="1997" name="Nature">
        <title>The nucleotide sequence of Saccharomyces cerevisiae chromosome XV.</title>
        <authorList>
            <person name="Dujon B."/>
            <person name="Albermann K."/>
            <person name="Aldea M."/>
            <person name="Alexandraki D."/>
            <person name="Ansorge W."/>
            <person name="Arino J."/>
            <person name="Benes V."/>
            <person name="Bohn C."/>
            <person name="Bolotin-Fukuhara M."/>
            <person name="Bordonne R."/>
            <person name="Boyer J."/>
            <person name="Camasses A."/>
            <person name="Casamayor A."/>
            <person name="Casas C."/>
            <person name="Cheret G."/>
            <person name="Cziepluch C."/>
            <person name="Daignan-Fornier B."/>
            <person name="Dang V.-D."/>
            <person name="de Haan M."/>
            <person name="Delius H."/>
            <person name="Durand P."/>
            <person name="Fairhead C."/>
            <person name="Feldmann H."/>
            <person name="Gaillon L."/>
            <person name="Galisson F."/>
            <person name="Gamo F.-J."/>
            <person name="Gancedo C."/>
            <person name="Goffeau A."/>
            <person name="Goulding S.E."/>
            <person name="Grivell L.A."/>
            <person name="Habbig B."/>
            <person name="Hand N.J."/>
            <person name="Hani J."/>
            <person name="Hattenhorst U."/>
            <person name="Hebling U."/>
            <person name="Hernando Y."/>
            <person name="Herrero E."/>
            <person name="Heumann K."/>
            <person name="Hiesel R."/>
            <person name="Hilger F."/>
            <person name="Hofmann B."/>
            <person name="Hollenberg C.P."/>
            <person name="Hughes B."/>
            <person name="Jauniaux J.-C."/>
            <person name="Kalogeropoulos A."/>
            <person name="Katsoulou C."/>
            <person name="Kordes E."/>
            <person name="Lafuente M.J."/>
            <person name="Landt O."/>
            <person name="Louis E.J."/>
            <person name="Maarse A.C."/>
            <person name="Madania A."/>
            <person name="Mannhaupt G."/>
            <person name="Marck C."/>
            <person name="Martin R.P."/>
            <person name="Mewes H.-W."/>
            <person name="Michaux G."/>
            <person name="Paces V."/>
            <person name="Parle-McDermott A.G."/>
            <person name="Pearson B.M."/>
            <person name="Perrin A."/>
            <person name="Pettersson B."/>
            <person name="Poch O."/>
            <person name="Pohl T.M."/>
            <person name="Poirey R."/>
            <person name="Portetelle D."/>
            <person name="Pujol A."/>
            <person name="Purnelle B."/>
            <person name="Ramezani Rad M."/>
            <person name="Rechmann S."/>
            <person name="Schwager C."/>
            <person name="Schweizer M."/>
            <person name="Sor F."/>
            <person name="Sterky F."/>
            <person name="Tarassov I.A."/>
            <person name="Teodoru C."/>
            <person name="Tettelin H."/>
            <person name="Thierry A."/>
            <person name="Tobiasch E."/>
            <person name="Tzermia M."/>
            <person name="Uhlen M."/>
            <person name="Unseld M."/>
            <person name="Valens M."/>
            <person name="Vandenbol M."/>
            <person name="Vetter I."/>
            <person name="Vlcek C."/>
            <person name="Voet M."/>
            <person name="Volckaert G."/>
            <person name="Voss H."/>
            <person name="Wambutt R."/>
            <person name="Wedler H."/>
            <person name="Wiemann S."/>
            <person name="Winsor B."/>
            <person name="Wolfe K.H."/>
            <person name="Zollner A."/>
            <person name="Zumstein E."/>
            <person name="Kleine K."/>
        </authorList>
    </citation>
    <scope>NUCLEOTIDE SEQUENCE [LARGE SCALE GENOMIC DNA]</scope>
    <source>
        <strain>ATCC 204508 / S288c</strain>
    </source>
</reference>
<reference key="2">
    <citation type="journal article" date="2014" name="G3 (Bethesda)">
        <title>The reference genome sequence of Saccharomyces cerevisiae: Then and now.</title>
        <authorList>
            <person name="Engel S.R."/>
            <person name="Dietrich F.S."/>
            <person name="Fisk D.G."/>
            <person name="Binkley G."/>
            <person name="Balakrishnan R."/>
            <person name="Costanzo M.C."/>
            <person name="Dwight S.S."/>
            <person name="Hitz B.C."/>
            <person name="Karra K."/>
            <person name="Nash R.S."/>
            <person name="Weng S."/>
            <person name="Wong E.D."/>
            <person name="Lloyd P."/>
            <person name="Skrzypek M.S."/>
            <person name="Miyasato S.R."/>
            <person name="Simison M."/>
            <person name="Cherry J.M."/>
        </authorList>
    </citation>
    <scope>GENOME REANNOTATION</scope>
    <source>
        <strain>ATCC 204508 / S288c</strain>
    </source>
</reference>
<reference key="3">
    <citation type="journal article" date="2007" name="Genome Res.">
        <title>Approaching a complete repository of sequence-verified protein-encoding clones for Saccharomyces cerevisiae.</title>
        <authorList>
            <person name="Hu Y."/>
            <person name="Rolfs A."/>
            <person name="Bhullar B."/>
            <person name="Murthy T.V.S."/>
            <person name="Zhu C."/>
            <person name="Berger M.F."/>
            <person name="Camargo A.A."/>
            <person name="Kelley F."/>
            <person name="McCarron S."/>
            <person name="Jepson D."/>
            <person name="Richardson A."/>
            <person name="Raphael J."/>
            <person name="Moreira D."/>
            <person name="Taycher E."/>
            <person name="Zuo D."/>
            <person name="Mohr S."/>
            <person name="Kane M.F."/>
            <person name="Williamson J."/>
            <person name="Simpson A.J.G."/>
            <person name="Bulyk M.L."/>
            <person name="Harlow E."/>
            <person name="Marsischky G."/>
            <person name="Kolodner R.D."/>
            <person name="LaBaer J."/>
        </authorList>
    </citation>
    <scope>NUCLEOTIDE SEQUENCE [GENOMIC DNA]</scope>
    <source>
        <strain>ATCC 204508 / S288c</strain>
    </source>
</reference>
<reference key="4">
    <citation type="journal article" date="1998" name="J. Biol. Chem.">
        <title>Metalloregulation of FRE1 and FRE2 homologs in Saccharomyces cerevisiae.</title>
        <authorList>
            <person name="Martins L.J."/>
            <person name="Jensen L.T."/>
            <person name="Simon J.R."/>
            <person name="Keller G.L."/>
            <person name="Winge D.R."/>
        </authorList>
    </citation>
    <scope>INDUCTION</scope>
</reference>
<reference key="5">
    <citation type="journal article" date="1998" name="J. Biol. Chem.">
        <authorList>
            <person name="Martins L.J."/>
            <person name="Jensen L.T."/>
            <person name="Simon J.R."/>
            <person name="Keller G.L."/>
            <person name="Winge D.R."/>
        </authorList>
    </citation>
    <scope>ERRATUM OF PUBMED:9726978</scope>
</reference>
<reference key="6">
    <citation type="journal article" date="1999" name="Yeast">
        <title>Regulated expression of the Saccharomyces cerevisiae Fre1p/Fre2p Fe/Cu reductase related genes.</title>
        <authorList>
            <person name="Georgatsou E."/>
            <person name="Alexandraki D."/>
        </authorList>
    </citation>
    <scope>INDUCTION</scope>
</reference>
<name>FRE5_YEAST</name>
<protein>
    <recommendedName>
        <fullName>Ferric reductase transmembrane component 5</fullName>
        <ecNumber>1.16.1.9</ecNumber>
    </recommendedName>
    <alternativeName>
        <fullName>Ferric-chelate reductase 5</fullName>
    </alternativeName>
</protein>
<dbReference type="EC" id="1.16.1.9"/>
<dbReference type="EMBL" id="Z75292">
    <property type="protein sequence ID" value="CAA99716.1"/>
    <property type="molecule type" value="Genomic_DNA"/>
</dbReference>
<dbReference type="EMBL" id="AY692958">
    <property type="protein sequence ID" value="AAT92977.1"/>
    <property type="molecule type" value="Genomic_DNA"/>
</dbReference>
<dbReference type="EMBL" id="BK006948">
    <property type="protein sequence ID" value="DAA11143.1"/>
    <property type="molecule type" value="Genomic_DNA"/>
</dbReference>
<dbReference type="PIR" id="S67296">
    <property type="entry name" value="S67296"/>
</dbReference>
<dbReference type="RefSeq" id="NP_015029.1">
    <property type="nucleotide sequence ID" value="NM_001183804.1"/>
</dbReference>
<dbReference type="SMR" id="Q08908"/>
<dbReference type="BioGRID" id="34765">
    <property type="interactions" value="21"/>
</dbReference>
<dbReference type="DIP" id="DIP-2747N"/>
<dbReference type="FunCoup" id="Q08908">
    <property type="interactions" value="440"/>
</dbReference>
<dbReference type="IntAct" id="Q08908">
    <property type="interactions" value="1"/>
</dbReference>
<dbReference type="MINT" id="Q08908"/>
<dbReference type="STRING" id="4932.YOR384W"/>
<dbReference type="GlyCosmos" id="Q08908">
    <property type="glycosylation" value="1 site, No reported glycans"/>
</dbReference>
<dbReference type="GlyGen" id="Q08908">
    <property type="glycosylation" value="1 site"/>
</dbReference>
<dbReference type="PaxDb" id="4932-YOR384W"/>
<dbReference type="PeptideAtlas" id="Q08908"/>
<dbReference type="EnsemblFungi" id="YOR384W_mRNA">
    <property type="protein sequence ID" value="YOR384W"/>
    <property type="gene ID" value="YOR384W"/>
</dbReference>
<dbReference type="GeneID" id="854566"/>
<dbReference type="KEGG" id="sce:YOR384W"/>
<dbReference type="AGR" id="SGD:S000005911"/>
<dbReference type="SGD" id="S000005911">
    <property type="gene designation" value="FRE5"/>
</dbReference>
<dbReference type="VEuPathDB" id="FungiDB:YOR384W"/>
<dbReference type="eggNOG" id="KOG0039">
    <property type="taxonomic scope" value="Eukaryota"/>
</dbReference>
<dbReference type="GeneTree" id="ENSGT00940000176662"/>
<dbReference type="HOGENOM" id="CLU_010365_4_0_1"/>
<dbReference type="InParanoid" id="Q08908"/>
<dbReference type="OMA" id="YNEDAHM"/>
<dbReference type="OrthoDB" id="4494341at2759"/>
<dbReference type="BioCyc" id="YEAST:G3O-33846-MONOMER"/>
<dbReference type="BioGRID-ORCS" id="854566">
    <property type="hits" value="0 hits in 10 CRISPR screens"/>
</dbReference>
<dbReference type="PRO" id="PR:Q08908"/>
<dbReference type="Proteomes" id="UP000002311">
    <property type="component" value="Chromosome XV"/>
</dbReference>
<dbReference type="RNAct" id="Q08908">
    <property type="molecule type" value="protein"/>
</dbReference>
<dbReference type="GO" id="GO:0005739">
    <property type="term" value="C:mitochondrion"/>
    <property type="evidence" value="ECO:0007005"/>
    <property type="project" value="SGD"/>
</dbReference>
<dbReference type="GO" id="GO:0005886">
    <property type="term" value="C:plasma membrane"/>
    <property type="evidence" value="ECO:0000318"/>
    <property type="project" value="GO_Central"/>
</dbReference>
<dbReference type="GO" id="GO:0052851">
    <property type="term" value="F:ferric-chelate reductase (NADPH) activity"/>
    <property type="evidence" value="ECO:0007669"/>
    <property type="project" value="UniProtKB-EC"/>
</dbReference>
<dbReference type="GO" id="GO:0000293">
    <property type="term" value="F:ferric-chelate reductase activity"/>
    <property type="evidence" value="ECO:0000247"/>
    <property type="project" value="SGD"/>
</dbReference>
<dbReference type="GO" id="GO:0046872">
    <property type="term" value="F:metal ion binding"/>
    <property type="evidence" value="ECO:0007669"/>
    <property type="project" value="UniProtKB-KW"/>
</dbReference>
<dbReference type="GO" id="GO:0015677">
    <property type="term" value="P:copper ion import"/>
    <property type="evidence" value="ECO:0000318"/>
    <property type="project" value="GO_Central"/>
</dbReference>
<dbReference type="GO" id="GO:0006879">
    <property type="term" value="P:intracellular iron ion homeostasis"/>
    <property type="evidence" value="ECO:0000318"/>
    <property type="project" value="GO_Central"/>
</dbReference>
<dbReference type="GO" id="GO:0006826">
    <property type="term" value="P:iron ion transport"/>
    <property type="evidence" value="ECO:0000318"/>
    <property type="project" value="GO_Central"/>
</dbReference>
<dbReference type="CDD" id="cd06186">
    <property type="entry name" value="NOX_Duox_like_FAD_NADP"/>
    <property type="match status" value="1"/>
</dbReference>
<dbReference type="FunFam" id="3.40.50.80:FF:000035">
    <property type="entry name" value="FRE4p Ferric reductase"/>
    <property type="match status" value="1"/>
</dbReference>
<dbReference type="Gene3D" id="3.40.50.80">
    <property type="entry name" value="Nucleotide-binding domain of ferredoxin-NADP reductase (FNR) module"/>
    <property type="match status" value="1"/>
</dbReference>
<dbReference type="InterPro" id="IPR013112">
    <property type="entry name" value="FAD-bd_8"/>
</dbReference>
<dbReference type="InterPro" id="IPR017927">
    <property type="entry name" value="FAD-bd_FR_type"/>
</dbReference>
<dbReference type="InterPro" id="IPR013130">
    <property type="entry name" value="Fe3_Rdtase_TM_dom"/>
</dbReference>
<dbReference type="InterPro" id="IPR013121">
    <property type="entry name" value="Fe_red_NAD-bd_6"/>
</dbReference>
<dbReference type="InterPro" id="IPR051410">
    <property type="entry name" value="Ferric/Cupric_Reductase"/>
</dbReference>
<dbReference type="InterPro" id="IPR039261">
    <property type="entry name" value="FNR_nucleotide-bd"/>
</dbReference>
<dbReference type="InterPro" id="IPR017938">
    <property type="entry name" value="Riboflavin_synthase-like_b-brl"/>
</dbReference>
<dbReference type="PANTHER" id="PTHR32361:SF9">
    <property type="entry name" value="FERRIC REDUCTASE TRANSMEMBRANE COMPONENT 3-RELATED"/>
    <property type="match status" value="1"/>
</dbReference>
<dbReference type="PANTHER" id="PTHR32361">
    <property type="entry name" value="FERRIC/CUPRIC REDUCTASE TRANSMEMBRANE COMPONENT"/>
    <property type="match status" value="1"/>
</dbReference>
<dbReference type="Pfam" id="PF08022">
    <property type="entry name" value="FAD_binding_8"/>
    <property type="match status" value="1"/>
</dbReference>
<dbReference type="Pfam" id="PF01794">
    <property type="entry name" value="Ferric_reduct"/>
    <property type="match status" value="1"/>
</dbReference>
<dbReference type="Pfam" id="PF08030">
    <property type="entry name" value="NAD_binding_6"/>
    <property type="match status" value="1"/>
</dbReference>
<dbReference type="SFLD" id="SFLDS00052">
    <property type="entry name" value="Ferric_Reductase_Domain"/>
    <property type="match status" value="1"/>
</dbReference>
<dbReference type="SFLD" id="SFLDG01168">
    <property type="entry name" value="Ferric_reductase_subgroup_(FRE"/>
    <property type="match status" value="1"/>
</dbReference>
<dbReference type="SUPFAM" id="SSF52343">
    <property type="entry name" value="Ferredoxin reductase-like, C-terminal NADP-linked domain"/>
    <property type="match status" value="1"/>
</dbReference>
<dbReference type="SUPFAM" id="SSF63380">
    <property type="entry name" value="Riboflavin synthase domain-like"/>
    <property type="match status" value="1"/>
</dbReference>
<dbReference type="PROSITE" id="PS51384">
    <property type="entry name" value="FAD_FR"/>
    <property type="match status" value="1"/>
</dbReference>
<accession>Q08908</accession>
<accession>D6W377</accession>
<comment type="function">
    <text evidence="1">Metalloreductase responsible for reducing extracellular iron and copper prior to import. Catalyzes the reductive uptake of Fe(3+)-salts and Fe(3+) bound to catecholate or hydroxamate siderophores. Fe(3+) is reduced to Fe(2+), which then dissociates from the siderophore and can be imported by the high-affinity Fe(2+) transport complex in the plasma membrane (By similarity).</text>
</comment>
<comment type="catalytic activity">
    <reaction>
        <text>2 a Fe(II)-siderophore + NADP(+) + H(+) = 2 a Fe(III)-siderophore + NADPH</text>
        <dbReference type="Rhea" id="RHEA:28795"/>
        <dbReference type="Rhea" id="RHEA-COMP:11342"/>
        <dbReference type="Rhea" id="RHEA-COMP:11344"/>
        <dbReference type="ChEBI" id="CHEBI:15378"/>
        <dbReference type="ChEBI" id="CHEBI:29033"/>
        <dbReference type="ChEBI" id="CHEBI:29034"/>
        <dbReference type="ChEBI" id="CHEBI:57783"/>
        <dbReference type="ChEBI" id="CHEBI:58349"/>
        <dbReference type="EC" id="1.16.1.9"/>
    </reaction>
</comment>
<comment type="cofactor">
    <cofactor evidence="6">
        <name>FAD</name>
        <dbReference type="ChEBI" id="CHEBI:57692"/>
    </cofactor>
</comment>
<comment type="subcellular location">
    <subcellularLocation>
        <location evidence="1">Cell membrane</location>
        <topology evidence="1">Multi-pass membrane protein</topology>
    </subcellularLocation>
</comment>
<comment type="induction">
    <text evidence="4 5">By iron deprivation.</text>
</comment>
<comment type="similarity">
    <text evidence="6">Belongs to the ferric reductase (FRE) family.</text>
</comment>
<sequence>MLFARLVLLLVYLAPGSLAKPASTKKRTQWDQIAIDACAKELESHKFDTDVKGRHATLCTYEPALGSWLHCAKDVLDSRKKSKKIFEKTFSKINQYCHDYHKDEVVSNEEYYRIFANASLFIRPLDEVKENIRYPVTPNKASLDRWVWAYFGPLDNIDKGNVYGVTICLYWIGVLFIAAVYHFLNFSRLKQTVFKNKVSAFLRGHYVLPALVHNHAMSVGRWFFIGLVPTRLETLVLFGYVLLHGFLLSSYNFDHNELLSDRRSQVLIFLSDRAGILAFAHFPLIVLFGGKNSTMTWLTGIRYTAFITYHKWLGRFMLVDCTIHAIGYTYHAYIENYWKYVKYSDLWTSGRHAMIIVGILVFFSFFFFRRHYYELFVITHIILAIGFFHACWKHCYKLGWGEWIMACALFWIADRILRLIKIAIFGMPWAKLKLCGESMIEVRISKSSKWWKAEPGQYIYLYFLRPKIFWQSHPFTVMDSLVEDGELVVVITVKNGLTKKLQEYLLESEGYTEMRVLAEGPYGQSTRTHLFESLLFIAGGAGVPGPLSMAIKAGRQVKSNDSHQMIKFVWSVRNLDLLEVYRKEIMVLKELNIDTKIYFTGERKDESNTEEGAIANMSTEGRLLTTSKSAEMITDFGRPNIDEIIEEAVSGAKSLLVTCCGSEGFVDKTRELTAKRVLEHGDKWIEYVEEFQNW</sequence>
<organism>
    <name type="scientific">Saccharomyces cerevisiae (strain ATCC 204508 / S288c)</name>
    <name type="common">Baker's yeast</name>
    <dbReference type="NCBI Taxonomy" id="559292"/>
    <lineage>
        <taxon>Eukaryota</taxon>
        <taxon>Fungi</taxon>
        <taxon>Dikarya</taxon>
        <taxon>Ascomycota</taxon>
        <taxon>Saccharomycotina</taxon>
        <taxon>Saccharomycetes</taxon>
        <taxon>Saccharomycetales</taxon>
        <taxon>Saccharomycetaceae</taxon>
        <taxon>Saccharomyces</taxon>
    </lineage>
</organism>
<evidence type="ECO:0000250" key="1"/>
<evidence type="ECO:0000255" key="2"/>
<evidence type="ECO:0000255" key="3">
    <source>
        <dbReference type="PROSITE-ProRule" id="PRU00716"/>
    </source>
</evidence>
<evidence type="ECO:0000269" key="4">
    <source>
    </source>
</evidence>
<evidence type="ECO:0000269" key="5">
    <source>
    </source>
</evidence>
<evidence type="ECO:0000305" key="6"/>
<feature type="signal peptide" evidence="2">
    <location>
        <begin position="1"/>
        <end position="19"/>
    </location>
</feature>
<feature type="chain" id="PRO_0000010141" description="Ferric reductase transmembrane component 5">
    <location>
        <begin position="20"/>
        <end position="694"/>
    </location>
</feature>
<feature type="topological domain" description="Extracellular" evidence="1">
    <location>
        <begin position="20"/>
        <end position="163"/>
    </location>
</feature>
<feature type="transmembrane region" description="Helical; Name=1" evidence="2">
    <location>
        <begin position="164"/>
        <end position="184"/>
    </location>
</feature>
<feature type="topological domain" description="Cytoplasmic" evidence="1">
    <location>
        <begin position="185"/>
        <end position="222"/>
    </location>
</feature>
<feature type="transmembrane region" description="Helical; Name=2" evidence="2">
    <location>
        <begin position="223"/>
        <end position="243"/>
    </location>
</feature>
<feature type="topological domain" description="Extracellular" evidence="1">
    <location>
        <begin position="244"/>
        <end position="267"/>
    </location>
</feature>
<feature type="transmembrane region" description="Helical; Name=3" evidence="2">
    <location>
        <begin position="268"/>
        <end position="288"/>
    </location>
</feature>
<feature type="topological domain" description="Cytoplasmic" evidence="1">
    <location>
        <begin position="289"/>
        <end position="311"/>
    </location>
</feature>
<feature type="transmembrane region" description="Helical; Name=4" evidence="2">
    <location>
        <begin position="312"/>
        <end position="334"/>
    </location>
</feature>
<feature type="topological domain" description="Extracellular" evidence="1">
    <location>
        <begin position="335"/>
        <end position="347"/>
    </location>
</feature>
<feature type="transmembrane region" description="Helical; Name=5" evidence="2">
    <location>
        <begin position="348"/>
        <end position="368"/>
    </location>
</feature>
<feature type="topological domain" description="Cytoplasmic" evidence="1">
    <location>
        <begin position="369"/>
        <end position="371"/>
    </location>
</feature>
<feature type="transmembrane region" description="Helical; Name=6" evidence="2">
    <location>
        <begin position="372"/>
        <end position="392"/>
    </location>
</feature>
<feature type="topological domain" description="Extracellular" evidence="1">
    <location>
        <begin position="393"/>
        <end position="403"/>
    </location>
</feature>
<feature type="transmembrane region" description="Helical; Name=7" evidence="2">
    <location>
        <begin position="404"/>
        <end position="424"/>
    </location>
</feature>
<feature type="topological domain" description="Cytoplasmic" evidence="1">
    <location>
        <begin position="425"/>
        <end position="694"/>
    </location>
</feature>
<feature type="domain" description="Ferric oxidoreductase">
    <location>
        <begin position="274"/>
        <end position="408"/>
    </location>
</feature>
<feature type="domain" description="FAD-binding FR-type" evidence="3">
    <location>
        <begin position="409"/>
        <end position="528"/>
    </location>
</feature>
<feature type="binding site" description="axial binding residue" evidence="1">
    <location>
        <position position="310"/>
    </location>
    <ligand>
        <name>heme</name>
        <dbReference type="ChEBI" id="CHEBI:30413"/>
        <label>1</label>
    </ligand>
    <ligandPart>
        <name>Fe</name>
        <dbReference type="ChEBI" id="CHEBI:18248"/>
    </ligandPart>
</feature>
<feature type="binding site" description="axial binding residue" evidence="1">
    <location>
        <position position="324"/>
    </location>
    <ligand>
        <name>heme</name>
        <dbReference type="ChEBI" id="CHEBI:30413"/>
        <label>2</label>
    </ligand>
    <ligandPart>
        <name>Fe</name>
        <dbReference type="ChEBI" id="CHEBI:18248"/>
    </ligandPart>
</feature>
<feature type="binding site" description="axial binding residue" evidence="1">
    <location>
        <position position="380"/>
    </location>
    <ligand>
        <name>heme</name>
        <dbReference type="ChEBI" id="CHEBI:30413"/>
        <label>1</label>
    </ligand>
    <ligandPart>
        <name>Fe</name>
        <dbReference type="ChEBI" id="CHEBI:18248"/>
    </ligandPart>
</feature>
<feature type="binding site" description="axial binding residue" evidence="1">
    <location>
        <position position="394"/>
    </location>
    <ligand>
        <name>heme</name>
        <dbReference type="ChEBI" id="CHEBI:30413"/>
        <label>2</label>
    </ligand>
    <ligandPart>
        <name>Fe</name>
        <dbReference type="ChEBI" id="CHEBI:18248"/>
    </ligandPart>
</feature>
<feature type="binding site" evidence="2">
    <location>
        <begin position="473"/>
        <end position="479"/>
    </location>
    <ligand>
        <name>FAD</name>
        <dbReference type="ChEBI" id="CHEBI:57692"/>
    </ligand>
</feature>
<feature type="binding site" evidence="2">
    <location>
        <begin position="520"/>
        <end position="523"/>
    </location>
    <ligand>
        <name>NADP(+)</name>
        <dbReference type="ChEBI" id="CHEBI:58349"/>
    </ligand>
</feature>
<feature type="binding site" evidence="2">
    <location>
        <begin position="660"/>
        <end position="661"/>
    </location>
    <ligand>
        <name>NADP(+)</name>
        <dbReference type="ChEBI" id="CHEBI:58349"/>
    </ligand>
</feature>
<feature type="glycosylation site" description="N-linked (GlcNAc...) asparagine" evidence="2">
    <location>
        <position position="117"/>
    </location>
</feature>
<proteinExistence type="evidence at transcript level"/>